<accession>P37294</accession>
<proteinExistence type="evidence at protein level"/>
<organism>
    <name type="scientific">Synechocystis sp. (strain ATCC 27184 / PCC 6803 / Kazusa)</name>
    <dbReference type="NCBI Taxonomy" id="1111708"/>
    <lineage>
        <taxon>Bacteria</taxon>
        <taxon>Bacillati</taxon>
        <taxon>Cyanobacteriota</taxon>
        <taxon>Cyanophyceae</taxon>
        <taxon>Synechococcales</taxon>
        <taxon>Merismopediaceae</taxon>
        <taxon>Synechocystis</taxon>
    </lineage>
</organism>
<gene>
    <name type="primary">crtB</name>
    <name type="synonym">pys</name>
    <name type="ordered locus">slr1255</name>
</gene>
<keyword id="KW-0125">Carotenoid biosynthesis</keyword>
<keyword id="KW-0460">Magnesium</keyword>
<keyword id="KW-0464">Manganese</keyword>
<keyword id="KW-0479">Metal-binding</keyword>
<keyword id="KW-1185">Reference proteome</keyword>
<keyword id="KW-0808">Transferase</keyword>
<sequence>MANGQISPQRAVTKPQSWWLTSEPRPSLMLQLPKPSPSAKPCASVEEAYEICRQVTAQYAKTFYLGTLLMPPAKRRAIWAIYLWCRRTDELVDGPQAATTTPETLDHWERRLEGIFAGQPQDDADVALVDTLETFPLDIQPFRDMIAGQRMDLYRSRYQTFEELDLYCYRVAGTVGLMSSAVLGVDTGNGQAPWQPDAVYIPQEEAIALGVANQLTNILRDVGEDVERGRIYLPLEDLERFNYSEQDLLNGVNDDRWRSLMKFEIDRARHYFEDAERGIRALNRDARWPVWTALMLYKGILDVIEANNYNVFNRRAYVPTPKKLLYLPVAWLRAQVL</sequence>
<feature type="chain" id="PRO_0000067438" description="15-cis-phytoene synthase">
    <location>
        <begin position="1"/>
        <end position="337"/>
    </location>
</feature>
<protein>
    <recommendedName>
        <fullName evidence="4">15-cis-phytoene synthase</fullName>
        <shortName>PSase</shortName>
        <ecNumber evidence="3">2.5.1.32</ecNumber>
    </recommendedName>
</protein>
<comment type="function">
    <text evidence="3">Involved in the biosynthesis of carotenoids. Catalyzes the condensation of two molecules of geranylgeranyl diphosphate (GGPP) to give prephytoene diphosphate (PPPP) and the subsequent rearrangement of the cyclopropylcarbinyl intermediate to yield 15-cis-phytoene.</text>
</comment>
<comment type="catalytic activity">
    <reaction evidence="3">
        <text>2 (2E,6E,10E)-geranylgeranyl diphosphate = 15-cis-phytoene + 2 diphosphate</text>
        <dbReference type="Rhea" id="RHEA:34475"/>
        <dbReference type="ChEBI" id="CHEBI:27787"/>
        <dbReference type="ChEBI" id="CHEBI:33019"/>
        <dbReference type="ChEBI" id="CHEBI:58756"/>
        <dbReference type="EC" id="2.5.1.32"/>
    </reaction>
</comment>
<comment type="cofactor">
    <cofactor evidence="1">
        <name>ATP</name>
        <dbReference type="ChEBI" id="CHEBI:30616"/>
    </cofactor>
    <text evidence="1">ATP is required for the transferase activity but it does not seem to be hydrolyzed during the reaction.</text>
</comment>
<comment type="cofactor">
    <cofactor evidence="1">
        <name>Mn(2+)</name>
        <dbReference type="ChEBI" id="CHEBI:29035"/>
    </cofactor>
    <cofactor evidence="1">
        <name>Mg(2+)</name>
        <dbReference type="ChEBI" id="CHEBI:18420"/>
    </cofactor>
</comment>
<comment type="pathway">
    <text>Carotenoid biosynthesis; phytoene biosynthesis.</text>
</comment>
<comment type="similarity">
    <text evidence="4">Belongs to the phytoene/squalene synthase family.</text>
</comment>
<comment type="caution">
    <text evidence="2">The enzyme produces 15-cis-phytoene. The conversion to all-trans-phytoene is due to photoisomerisation.</text>
</comment>
<name>CRTB_SYNY3</name>
<reference key="1">
    <citation type="journal article" date="1994" name="Biochim. Biophys. Acta">
        <title>Cloning and expression in Escherichia coli of the gene coding for phytoene synthase from the cyanobacterium Synechocystis sp. PCC6803.</title>
        <authorList>
            <person name="Martinez-Ferez I.M."/>
            <person name="Fernandez-Gonzalez B."/>
            <person name="Sandmann G."/>
            <person name="Vioque A."/>
        </authorList>
    </citation>
    <scope>NUCLEOTIDE SEQUENCE [GENOMIC DNA]</scope>
    <scope>FUNCTION</scope>
    <scope>CATALYTIC ACTIVITY</scope>
</reference>
<reference key="2">
    <citation type="journal article" date="1996" name="DNA Res.">
        <title>Sequence analysis of the genome of the unicellular cyanobacterium Synechocystis sp. strain PCC6803. II. Sequence determination of the entire genome and assignment of potential protein-coding regions.</title>
        <authorList>
            <person name="Kaneko T."/>
            <person name="Sato S."/>
            <person name="Kotani H."/>
            <person name="Tanaka A."/>
            <person name="Asamizu E."/>
            <person name="Nakamura Y."/>
            <person name="Miyajima N."/>
            <person name="Hirosawa M."/>
            <person name="Sugiura M."/>
            <person name="Sasamoto S."/>
            <person name="Kimura T."/>
            <person name="Hosouchi T."/>
            <person name="Matsuno A."/>
            <person name="Muraki A."/>
            <person name="Nakazaki N."/>
            <person name="Naruo K."/>
            <person name="Okumura S."/>
            <person name="Shimpo S."/>
            <person name="Takeuchi C."/>
            <person name="Wada T."/>
            <person name="Watanabe A."/>
            <person name="Yamada M."/>
            <person name="Yasuda M."/>
            <person name="Tabata S."/>
        </authorList>
    </citation>
    <scope>NUCLEOTIDE SEQUENCE [LARGE SCALE GENOMIC DNA]</scope>
    <source>
        <strain>ATCC 27184 / PCC 6803 / Kazusa</strain>
    </source>
</reference>
<evidence type="ECO:0000250" key="1"/>
<evidence type="ECO:0000250" key="2">
    <source>
        <dbReference type="UniProtKB" id="D5KXJ0"/>
    </source>
</evidence>
<evidence type="ECO:0000269" key="3">
    <source>
    </source>
</evidence>
<evidence type="ECO:0000305" key="4"/>
<dbReference type="EC" id="2.5.1.32" evidence="3"/>
<dbReference type="EMBL" id="X69172">
    <property type="protein sequence ID" value="CAA48922.1"/>
    <property type="molecule type" value="Genomic_DNA"/>
</dbReference>
<dbReference type="EMBL" id="BA000022">
    <property type="protein sequence ID" value="BAA17848.1"/>
    <property type="molecule type" value="Genomic_DNA"/>
</dbReference>
<dbReference type="PIR" id="S45360">
    <property type="entry name" value="S45360"/>
</dbReference>
<dbReference type="SMR" id="P37294"/>
<dbReference type="FunCoup" id="P37294">
    <property type="interactions" value="88"/>
</dbReference>
<dbReference type="STRING" id="1148.gene:10498716"/>
<dbReference type="PaxDb" id="1148-1652930"/>
<dbReference type="EnsemblBacteria" id="BAA17848">
    <property type="protein sequence ID" value="BAA17848"/>
    <property type="gene ID" value="BAA17848"/>
</dbReference>
<dbReference type="KEGG" id="syn:slr1255"/>
<dbReference type="eggNOG" id="COG1562">
    <property type="taxonomic scope" value="Bacteria"/>
</dbReference>
<dbReference type="InParanoid" id="P37294"/>
<dbReference type="PhylomeDB" id="P37294"/>
<dbReference type="UniPathway" id="UPA00799"/>
<dbReference type="Proteomes" id="UP000001425">
    <property type="component" value="Chromosome"/>
</dbReference>
<dbReference type="GO" id="GO:0046905">
    <property type="term" value="F:15-cis-phytoene synthase activity"/>
    <property type="evidence" value="ECO:0000314"/>
    <property type="project" value="UniProtKB"/>
</dbReference>
<dbReference type="GO" id="GO:0004311">
    <property type="term" value="F:geranylgeranyl diphosphate synthase activity"/>
    <property type="evidence" value="ECO:0007669"/>
    <property type="project" value="InterPro"/>
</dbReference>
<dbReference type="GO" id="GO:0046872">
    <property type="term" value="F:metal ion binding"/>
    <property type="evidence" value="ECO:0007669"/>
    <property type="project" value="UniProtKB-KW"/>
</dbReference>
<dbReference type="GO" id="GO:0051996">
    <property type="term" value="F:squalene synthase [NAD(P)H] activity"/>
    <property type="evidence" value="ECO:0007669"/>
    <property type="project" value="InterPro"/>
</dbReference>
<dbReference type="GO" id="GO:0016117">
    <property type="term" value="P:carotenoid biosynthetic process"/>
    <property type="evidence" value="ECO:0000314"/>
    <property type="project" value="UniProtKB"/>
</dbReference>
<dbReference type="CDD" id="cd00683">
    <property type="entry name" value="Trans_IPPS_HH"/>
    <property type="match status" value="1"/>
</dbReference>
<dbReference type="FunFam" id="1.10.600.10:FF:000004">
    <property type="entry name" value="Phytoene synthase chloroplastic"/>
    <property type="match status" value="1"/>
</dbReference>
<dbReference type="Gene3D" id="1.10.600.10">
    <property type="entry name" value="Farnesyl Diphosphate Synthase"/>
    <property type="match status" value="1"/>
</dbReference>
<dbReference type="InterPro" id="IPR008949">
    <property type="entry name" value="Isoprenoid_synthase_dom_sf"/>
</dbReference>
<dbReference type="InterPro" id="IPR054866">
    <property type="entry name" value="PhytoSynCyanob"/>
</dbReference>
<dbReference type="InterPro" id="IPR002060">
    <property type="entry name" value="Squ/phyt_synthse"/>
</dbReference>
<dbReference type="InterPro" id="IPR019845">
    <property type="entry name" value="Squalene/phytoene_synthase_CS"/>
</dbReference>
<dbReference type="InterPro" id="IPR044843">
    <property type="entry name" value="Trans_IPPS_bact-type"/>
</dbReference>
<dbReference type="InterPro" id="IPR033904">
    <property type="entry name" value="Trans_IPPS_HH"/>
</dbReference>
<dbReference type="NCBIfam" id="NF045686">
    <property type="entry name" value="PhytoSynCyanob"/>
    <property type="match status" value="1"/>
</dbReference>
<dbReference type="PANTHER" id="PTHR31480">
    <property type="entry name" value="BIFUNCTIONAL LYCOPENE CYCLASE/PHYTOENE SYNTHASE"/>
    <property type="match status" value="1"/>
</dbReference>
<dbReference type="Pfam" id="PF00494">
    <property type="entry name" value="SQS_PSY"/>
    <property type="match status" value="1"/>
</dbReference>
<dbReference type="SFLD" id="SFLDS00005">
    <property type="entry name" value="Isoprenoid_Synthase_Type_I"/>
    <property type="match status" value="1"/>
</dbReference>
<dbReference type="SFLD" id="SFLDG01212">
    <property type="entry name" value="Phytoene_synthase_like"/>
    <property type="match status" value="1"/>
</dbReference>
<dbReference type="SUPFAM" id="SSF48576">
    <property type="entry name" value="Terpenoid synthases"/>
    <property type="match status" value="1"/>
</dbReference>
<dbReference type="PROSITE" id="PS01044">
    <property type="entry name" value="SQUALEN_PHYTOEN_SYN_1"/>
    <property type="match status" value="1"/>
</dbReference>
<dbReference type="PROSITE" id="PS01045">
    <property type="entry name" value="SQUALEN_PHYTOEN_SYN_2"/>
    <property type="match status" value="1"/>
</dbReference>